<feature type="chain" id="PRO_1000019271" description="Ferrochelatase">
    <location>
        <begin position="1"/>
        <end position="341"/>
    </location>
</feature>
<feature type="binding site" evidence="1">
    <location>
        <position position="210"/>
    </location>
    <ligand>
        <name>Fe cation</name>
        <dbReference type="ChEBI" id="CHEBI:24875"/>
    </ligand>
</feature>
<feature type="binding site" evidence="1">
    <location>
        <position position="291"/>
    </location>
    <ligand>
        <name>Fe cation</name>
        <dbReference type="ChEBI" id="CHEBI:24875"/>
    </ligand>
</feature>
<organism>
    <name type="scientific">Alcanivorax borkumensis (strain ATCC 700651 / DSM 11573 / NCIMB 13689 / SK2)</name>
    <dbReference type="NCBI Taxonomy" id="393595"/>
    <lineage>
        <taxon>Bacteria</taxon>
        <taxon>Pseudomonadati</taxon>
        <taxon>Pseudomonadota</taxon>
        <taxon>Gammaproteobacteria</taxon>
        <taxon>Oceanospirillales</taxon>
        <taxon>Alcanivoracaceae</taxon>
        <taxon>Alcanivorax</taxon>
    </lineage>
</organism>
<keyword id="KW-0963">Cytoplasm</keyword>
<keyword id="KW-0350">Heme biosynthesis</keyword>
<keyword id="KW-0408">Iron</keyword>
<keyword id="KW-0456">Lyase</keyword>
<keyword id="KW-0479">Metal-binding</keyword>
<keyword id="KW-0627">Porphyrin biosynthesis</keyword>
<keyword id="KW-1185">Reference proteome</keyword>
<dbReference type="EC" id="4.98.1.1" evidence="1"/>
<dbReference type="EMBL" id="AM286690">
    <property type="protein sequence ID" value="CAL15742.1"/>
    <property type="molecule type" value="Genomic_DNA"/>
</dbReference>
<dbReference type="RefSeq" id="WP_011587590.1">
    <property type="nucleotide sequence ID" value="NC_008260.1"/>
</dbReference>
<dbReference type="SMR" id="Q0VSV6"/>
<dbReference type="STRING" id="393595.ABO_0294"/>
<dbReference type="KEGG" id="abo:ABO_0294"/>
<dbReference type="eggNOG" id="COG0276">
    <property type="taxonomic scope" value="Bacteria"/>
</dbReference>
<dbReference type="HOGENOM" id="CLU_018884_0_0_6"/>
<dbReference type="OrthoDB" id="9809741at2"/>
<dbReference type="UniPathway" id="UPA00252">
    <property type="reaction ID" value="UER00325"/>
</dbReference>
<dbReference type="Proteomes" id="UP000008871">
    <property type="component" value="Chromosome"/>
</dbReference>
<dbReference type="GO" id="GO:0005737">
    <property type="term" value="C:cytoplasm"/>
    <property type="evidence" value="ECO:0007669"/>
    <property type="project" value="UniProtKB-SubCell"/>
</dbReference>
<dbReference type="GO" id="GO:0004325">
    <property type="term" value="F:ferrochelatase activity"/>
    <property type="evidence" value="ECO:0007669"/>
    <property type="project" value="UniProtKB-UniRule"/>
</dbReference>
<dbReference type="GO" id="GO:0046872">
    <property type="term" value="F:metal ion binding"/>
    <property type="evidence" value="ECO:0007669"/>
    <property type="project" value="UniProtKB-KW"/>
</dbReference>
<dbReference type="GO" id="GO:0006783">
    <property type="term" value="P:heme biosynthetic process"/>
    <property type="evidence" value="ECO:0007669"/>
    <property type="project" value="UniProtKB-UniRule"/>
</dbReference>
<dbReference type="CDD" id="cd00419">
    <property type="entry name" value="Ferrochelatase_C"/>
    <property type="match status" value="1"/>
</dbReference>
<dbReference type="CDD" id="cd03411">
    <property type="entry name" value="Ferrochelatase_N"/>
    <property type="match status" value="1"/>
</dbReference>
<dbReference type="FunFam" id="3.40.50.1400:FF:000002">
    <property type="entry name" value="Ferrochelatase"/>
    <property type="match status" value="1"/>
</dbReference>
<dbReference type="Gene3D" id="3.40.50.1400">
    <property type="match status" value="2"/>
</dbReference>
<dbReference type="HAMAP" id="MF_00323">
    <property type="entry name" value="Ferrochelatase"/>
    <property type="match status" value="1"/>
</dbReference>
<dbReference type="InterPro" id="IPR001015">
    <property type="entry name" value="Ferrochelatase"/>
</dbReference>
<dbReference type="InterPro" id="IPR019772">
    <property type="entry name" value="Ferrochelatase_AS"/>
</dbReference>
<dbReference type="InterPro" id="IPR033644">
    <property type="entry name" value="Ferrochelatase_C"/>
</dbReference>
<dbReference type="InterPro" id="IPR033659">
    <property type="entry name" value="Ferrochelatase_N"/>
</dbReference>
<dbReference type="NCBIfam" id="TIGR00109">
    <property type="entry name" value="hemH"/>
    <property type="match status" value="1"/>
</dbReference>
<dbReference type="PANTHER" id="PTHR11108">
    <property type="entry name" value="FERROCHELATASE"/>
    <property type="match status" value="1"/>
</dbReference>
<dbReference type="PANTHER" id="PTHR11108:SF1">
    <property type="entry name" value="FERROCHELATASE, MITOCHONDRIAL"/>
    <property type="match status" value="1"/>
</dbReference>
<dbReference type="Pfam" id="PF00762">
    <property type="entry name" value="Ferrochelatase"/>
    <property type="match status" value="1"/>
</dbReference>
<dbReference type="SUPFAM" id="SSF53800">
    <property type="entry name" value="Chelatase"/>
    <property type="match status" value="1"/>
</dbReference>
<dbReference type="PROSITE" id="PS00534">
    <property type="entry name" value="FERROCHELATASE"/>
    <property type="match status" value="1"/>
</dbReference>
<evidence type="ECO:0000255" key="1">
    <source>
        <dbReference type="HAMAP-Rule" id="MF_00323"/>
    </source>
</evidence>
<gene>
    <name evidence="1" type="primary">hemH</name>
    <name type="ordered locus">ABO_0294</name>
</gene>
<reference key="1">
    <citation type="journal article" date="2006" name="Nat. Biotechnol.">
        <title>Genome sequence of the ubiquitous hydrocarbon-degrading marine bacterium Alcanivorax borkumensis.</title>
        <authorList>
            <person name="Schneiker S."/>
            <person name="Martins dos Santos V.A.P."/>
            <person name="Bartels D."/>
            <person name="Bekel T."/>
            <person name="Brecht M."/>
            <person name="Buhrmester J."/>
            <person name="Chernikova T.N."/>
            <person name="Denaro R."/>
            <person name="Ferrer M."/>
            <person name="Gertler C."/>
            <person name="Goesmann A."/>
            <person name="Golyshina O.V."/>
            <person name="Kaminski F."/>
            <person name="Khachane A.N."/>
            <person name="Lang S."/>
            <person name="Linke B."/>
            <person name="McHardy A.C."/>
            <person name="Meyer F."/>
            <person name="Nechitaylo T."/>
            <person name="Puehler A."/>
            <person name="Regenhardt D."/>
            <person name="Rupp O."/>
            <person name="Sabirova J.S."/>
            <person name="Selbitschka W."/>
            <person name="Yakimov M.M."/>
            <person name="Timmis K.N."/>
            <person name="Vorhoelter F.-J."/>
            <person name="Weidner S."/>
            <person name="Kaiser O."/>
            <person name="Golyshin P.N."/>
        </authorList>
    </citation>
    <scope>NUCLEOTIDE SEQUENCE [LARGE SCALE GENOMIC DNA]</scope>
    <source>
        <strain>ATCC 700651 / DSM 11573 / NCIMB 13689 / SK2</strain>
    </source>
</reference>
<comment type="function">
    <text evidence="1">Catalyzes the ferrous insertion into protoporphyrin IX.</text>
</comment>
<comment type="catalytic activity">
    <reaction evidence="1">
        <text>heme b + 2 H(+) = protoporphyrin IX + Fe(2+)</text>
        <dbReference type="Rhea" id="RHEA:22584"/>
        <dbReference type="ChEBI" id="CHEBI:15378"/>
        <dbReference type="ChEBI" id="CHEBI:29033"/>
        <dbReference type="ChEBI" id="CHEBI:57306"/>
        <dbReference type="ChEBI" id="CHEBI:60344"/>
        <dbReference type="EC" id="4.98.1.1"/>
    </reaction>
</comment>
<comment type="pathway">
    <text evidence="1">Porphyrin-containing compound metabolism; protoheme biosynthesis; protoheme from protoporphyrin-IX: step 1/1.</text>
</comment>
<comment type="subcellular location">
    <subcellularLocation>
        <location evidence="1">Cytoplasm</location>
    </subcellularLocation>
</comment>
<comment type="similarity">
    <text evidence="1">Belongs to the ferrochelatase family.</text>
</comment>
<proteinExistence type="inferred from homology"/>
<name>HEMH_ALCBS</name>
<protein>
    <recommendedName>
        <fullName evidence="1">Ferrochelatase</fullName>
        <ecNumber evidence="1">4.98.1.1</ecNumber>
    </recommendedName>
    <alternativeName>
        <fullName evidence="1">Heme synthase</fullName>
    </alternativeName>
    <alternativeName>
        <fullName evidence="1">Protoheme ferro-lyase</fullName>
    </alternativeName>
</protein>
<sequence length="341" mass="38529">MAYKGQENLEHLNPRKVGVLITNLGTPDAPETGALRRYLREFLSDPRVVEIPRFIWFFILNLVILVIRPRKSAEAYKSVWTEEGSPLLVYSLAQGEGIRQRLQSKYGDDVVVRVAMRYGNPSIASQLQAFEDEGIRKLVVLPLYPQYSGSTNGSTFDAVAQDFMGRRLLPDLRFISHYPDYPPYIQAMAEHIRAYREKNGSADKLVFSFHGVPKRFLLKGDPYFHECHQTSQLLAKALGLSDGQWMTTFQSRFGAEEWLQPYTDATMKSLPGEGVKSVQVFCPGFSADCLETVEEIDQENREYFEEAGGESFAYISALNAEPAHLDALAQLVEDNLQGFLP</sequence>
<accession>Q0VSV6</accession>